<dbReference type="EMBL" id="AK032295">
    <property type="protein sequence ID" value="BAC27798.1"/>
    <property type="status" value="ALT_FRAME"/>
    <property type="molecule type" value="mRNA"/>
</dbReference>
<dbReference type="EMBL" id="AK048357">
    <property type="protein sequence ID" value="BAC33311.1"/>
    <property type="molecule type" value="mRNA"/>
</dbReference>
<dbReference type="EMBL" id="AK156203">
    <property type="protein sequence ID" value="BAE33624.1"/>
    <property type="molecule type" value="mRNA"/>
</dbReference>
<dbReference type="EMBL" id="BC026562">
    <property type="protein sequence ID" value="AAH26562.1"/>
    <property type="status" value="ALT_INIT"/>
    <property type="molecule type" value="mRNA"/>
</dbReference>
<dbReference type="CCDS" id="CCDS56894.1"/>
<dbReference type="RefSeq" id="NP_666159.2">
    <property type="nucleotide sequence ID" value="NM_146047.2"/>
</dbReference>
<dbReference type="FunCoup" id="Q8BXA5">
    <property type="interactions" value="2226"/>
</dbReference>
<dbReference type="STRING" id="10090.ENSMUSP00000022102"/>
<dbReference type="GlyConnect" id="2219">
    <property type="glycosylation" value="7 N-Linked glycans (3 sites)"/>
</dbReference>
<dbReference type="GlyCosmos" id="Q8BXA5">
    <property type="glycosylation" value="3 sites, 7 glycans"/>
</dbReference>
<dbReference type="GlyGen" id="Q8BXA5">
    <property type="glycosylation" value="3 sites, 9 N-linked glycans (3 sites)"/>
</dbReference>
<dbReference type="iPTMnet" id="Q8BXA5"/>
<dbReference type="PhosphoSitePlus" id="Q8BXA5"/>
<dbReference type="SwissPalm" id="Q8BXA5"/>
<dbReference type="jPOST" id="Q8BXA5"/>
<dbReference type="PaxDb" id="10090-ENSMUSP00000022102"/>
<dbReference type="PeptideAtlas" id="Q8BXA5"/>
<dbReference type="ProteomicsDB" id="283313"/>
<dbReference type="Pumba" id="Q8BXA5"/>
<dbReference type="Antibodypedia" id="3079">
    <property type="antibodies" value="206 antibodies from 23 providers"/>
</dbReference>
<dbReference type="Ensembl" id="ENSMUST00000022102.9">
    <property type="protein sequence ID" value="ENSMUSP00000022102.8"/>
    <property type="gene ID" value="ENSMUSG00000021610.9"/>
</dbReference>
<dbReference type="GeneID" id="218335"/>
<dbReference type="KEGG" id="mmu:218335"/>
<dbReference type="UCSC" id="uc007rdo.2">
    <property type="organism name" value="mouse"/>
</dbReference>
<dbReference type="AGR" id="MGI:2442892"/>
<dbReference type="CTD" id="81037"/>
<dbReference type="MGI" id="MGI:2442892">
    <property type="gene designation" value="Clptm1l"/>
</dbReference>
<dbReference type="VEuPathDB" id="HostDB:ENSMUSG00000021610"/>
<dbReference type="eggNOG" id="KOG2489">
    <property type="taxonomic scope" value="Eukaryota"/>
</dbReference>
<dbReference type="GeneTree" id="ENSGT00530000063461"/>
<dbReference type="HOGENOM" id="CLU_019907_4_1_1"/>
<dbReference type="InParanoid" id="Q8BXA5"/>
<dbReference type="OMA" id="TTMWRAF"/>
<dbReference type="OrthoDB" id="378564at2759"/>
<dbReference type="PhylomeDB" id="Q8BXA5"/>
<dbReference type="TreeFam" id="TF318501"/>
<dbReference type="BioGRID-ORCS" id="218335">
    <property type="hits" value="1 hit in 77 CRISPR screens"/>
</dbReference>
<dbReference type="ChiTaRS" id="Clptm1l">
    <property type="organism name" value="mouse"/>
</dbReference>
<dbReference type="PRO" id="PR:Q8BXA5"/>
<dbReference type="Proteomes" id="UP000000589">
    <property type="component" value="Chromosome 13"/>
</dbReference>
<dbReference type="RNAct" id="Q8BXA5">
    <property type="molecule type" value="protein"/>
</dbReference>
<dbReference type="Bgee" id="ENSMUSG00000021610">
    <property type="expression patterns" value="Expressed in lacrimal gland and 254 other cell types or tissues"/>
</dbReference>
<dbReference type="GO" id="GO:0005789">
    <property type="term" value="C:endoplasmic reticulum membrane"/>
    <property type="evidence" value="ECO:0000250"/>
    <property type="project" value="UniProtKB"/>
</dbReference>
<dbReference type="GO" id="GO:0017128">
    <property type="term" value="F:phospholipid scramblase activity"/>
    <property type="evidence" value="ECO:0000250"/>
    <property type="project" value="UniProtKB"/>
</dbReference>
<dbReference type="GO" id="GO:0006915">
    <property type="term" value="P:apoptotic process"/>
    <property type="evidence" value="ECO:0007669"/>
    <property type="project" value="UniProtKB-KW"/>
</dbReference>
<dbReference type="InterPro" id="IPR008429">
    <property type="entry name" value="CLPTM1"/>
</dbReference>
<dbReference type="PANTHER" id="PTHR21347">
    <property type="entry name" value="CLEFT LIP AND PALATE ASSOCIATED TRANSMEMBRANE PROTEIN-RELATED"/>
    <property type="match status" value="1"/>
</dbReference>
<dbReference type="PANTHER" id="PTHR21347:SF0">
    <property type="entry name" value="LIPID SCRAMBLASE CLPTM1L"/>
    <property type="match status" value="1"/>
</dbReference>
<dbReference type="Pfam" id="PF05602">
    <property type="entry name" value="CLPTM1"/>
    <property type="match status" value="1"/>
</dbReference>
<sequence>MWSGRSSFTSLVVGVFLVYVVHTCWVMYGIVYTRPCSGDSNCIQPYLALRPKLQLSVYTTTRSSLGAENNVDLILNVEDFDVDSKFERTVNVSVPKKTRNNGTLYAYIFLHHAGILPWQDGKQVHVVSTLTTYMIPKPEEINLLTGESATQQQIEAEKKPSNALDEPVSHWRPRLTLNVMVDDFVFDGSSLPADVHRYMKMIQLGKTVHYLPILFIDQLSNRVKDLMVINRSTTELPLTVSYDKISLGRLRFWIHMQDAVYSLQQFGFSEKDADELKGIFVDTNLYLLALTFFVAAFHLLFDFLAFKSDISFWKKKKSMIGMSTKAVLWRCFSTVVIFLFLLDEQTSLLVLIPAGVGAAIELWKVKKALKITVAWRGLRPVFQFGTHSESERKTEKYDAQAMKYLSYLLYPLCVGGAVYSLLNIKYKSWYSWLINSFVNGVYAFGFLFMLPQLFVNYKMKSVAHLPWKAFTYKAFNTFIDDVFAFIITMPTSHRLACFRDDVVFLVYLYQRWLYPVDKSRVNEFGESYEEQPKRKPHPD</sequence>
<evidence type="ECO:0000250" key="1">
    <source>
        <dbReference type="UniProtKB" id="Q96KA5"/>
    </source>
</evidence>
<evidence type="ECO:0000255" key="2"/>
<evidence type="ECO:0000305" key="3"/>
<proteinExistence type="evidence at protein level"/>
<reference key="1">
    <citation type="journal article" date="2005" name="Science">
        <title>The transcriptional landscape of the mammalian genome.</title>
        <authorList>
            <person name="Carninci P."/>
            <person name="Kasukawa T."/>
            <person name="Katayama S."/>
            <person name="Gough J."/>
            <person name="Frith M.C."/>
            <person name="Maeda N."/>
            <person name="Oyama R."/>
            <person name="Ravasi T."/>
            <person name="Lenhard B."/>
            <person name="Wells C."/>
            <person name="Kodzius R."/>
            <person name="Shimokawa K."/>
            <person name="Bajic V.B."/>
            <person name="Brenner S.E."/>
            <person name="Batalov S."/>
            <person name="Forrest A.R."/>
            <person name="Zavolan M."/>
            <person name="Davis M.J."/>
            <person name="Wilming L.G."/>
            <person name="Aidinis V."/>
            <person name="Allen J.E."/>
            <person name="Ambesi-Impiombato A."/>
            <person name="Apweiler R."/>
            <person name="Aturaliya R.N."/>
            <person name="Bailey T.L."/>
            <person name="Bansal M."/>
            <person name="Baxter L."/>
            <person name="Beisel K.W."/>
            <person name="Bersano T."/>
            <person name="Bono H."/>
            <person name="Chalk A.M."/>
            <person name="Chiu K.P."/>
            <person name="Choudhary V."/>
            <person name="Christoffels A."/>
            <person name="Clutterbuck D.R."/>
            <person name="Crowe M.L."/>
            <person name="Dalla E."/>
            <person name="Dalrymple B.P."/>
            <person name="de Bono B."/>
            <person name="Della Gatta G."/>
            <person name="di Bernardo D."/>
            <person name="Down T."/>
            <person name="Engstrom P."/>
            <person name="Fagiolini M."/>
            <person name="Faulkner G."/>
            <person name="Fletcher C.F."/>
            <person name="Fukushima T."/>
            <person name="Furuno M."/>
            <person name="Futaki S."/>
            <person name="Gariboldi M."/>
            <person name="Georgii-Hemming P."/>
            <person name="Gingeras T.R."/>
            <person name="Gojobori T."/>
            <person name="Green R.E."/>
            <person name="Gustincich S."/>
            <person name="Harbers M."/>
            <person name="Hayashi Y."/>
            <person name="Hensch T.K."/>
            <person name="Hirokawa N."/>
            <person name="Hill D."/>
            <person name="Huminiecki L."/>
            <person name="Iacono M."/>
            <person name="Ikeo K."/>
            <person name="Iwama A."/>
            <person name="Ishikawa T."/>
            <person name="Jakt M."/>
            <person name="Kanapin A."/>
            <person name="Katoh M."/>
            <person name="Kawasawa Y."/>
            <person name="Kelso J."/>
            <person name="Kitamura H."/>
            <person name="Kitano H."/>
            <person name="Kollias G."/>
            <person name="Krishnan S.P."/>
            <person name="Kruger A."/>
            <person name="Kummerfeld S.K."/>
            <person name="Kurochkin I.V."/>
            <person name="Lareau L.F."/>
            <person name="Lazarevic D."/>
            <person name="Lipovich L."/>
            <person name="Liu J."/>
            <person name="Liuni S."/>
            <person name="McWilliam S."/>
            <person name="Madan Babu M."/>
            <person name="Madera M."/>
            <person name="Marchionni L."/>
            <person name="Matsuda H."/>
            <person name="Matsuzawa S."/>
            <person name="Miki H."/>
            <person name="Mignone F."/>
            <person name="Miyake S."/>
            <person name="Morris K."/>
            <person name="Mottagui-Tabar S."/>
            <person name="Mulder N."/>
            <person name="Nakano N."/>
            <person name="Nakauchi H."/>
            <person name="Ng P."/>
            <person name="Nilsson R."/>
            <person name="Nishiguchi S."/>
            <person name="Nishikawa S."/>
            <person name="Nori F."/>
            <person name="Ohara O."/>
            <person name="Okazaki Y."/>
            <person name="Orlando V."/>
            <person name="Pang K.C."/>
            <person name="Pavan W.J."/>
            <person name="Pavesi G."/>
            <person name="Pesole G."/>
            <person name="Petrovsky N."/>
            <person name="Piazza S."/>
            <person name="Reed J."/>
            <person name="Reid J.F."/>
            <person name="Ring B.Z."/>
            <person name="Ringwald M."/>
            <person name="Rost B."/>
            <person name="Ruan Y."/>
            <person name="Salzberg S.L."/>
            <person name="Sandelin A."/>
            <person name="Schneider C."/>
            <person name="Schoenbach C."/>
            <person name="Sekiguchi K."/>
            <person name="Semple C.A."/>
            <person name="Seno S."/>
            <person name="Sessa L."/>
            <person name="Sheng Y."/>
            <person name="Shibata Y."/>
            <person name="Shimada H."/>
            <person name="Shimada K."/>
            <person name="Silva D."/>
            <person name="Sinclair B."/>
            <person name="Sperling S."/>
            <person name="Stupka E."/>
            <person name="Sugiura K."/>
            <person name="Sultana R."/>
            <person name="Takenaka Y."/>
            <person name="Taki K."/>
            <person name="Tammoja K."/>
            <person name="Tan S.L."/>
            <person name="Tang S."/>
            <person name="Taylor M.S."/>
            <person name="Tegner J."/>
            <person name="Teichmann S.A."/>
            <person name="Ueda H.R."/>
            <person name="van Nimwegen E."/>
            <person name="Verardo R."/>
            <person name="Wei C.L."/>
            <person name="Yagi K."/>
            <person name="Yamanishi H."/>
            <person name="Zabarovsky E."/>
            <person name="Zhu S."/>
            <person name="Zimmer A."/>
            <person name="Hide W."/>
            <person name="Bult C."/>
            <person name="Grimmond S.M."/>
            <person name="Teasdale R.D."/>
            <person name="Liu E.T."/>
            <person name="Brusic V."/>
            <person name="Quackenbush J."/>
            <person name="Wahlestedt C."/>
            <person name="Mattick J.S."/>
            <person name="Hume D.A."/>
            <person name="Kai C."/>
            <person name="Sasaki D."/>
            <person name="Tomaru Y."/>
            <person name="Fukuda S."/>
            <person name="Kanamori-Katayama M."/>
            <person name="Suzuki M."/>
            <person name="Aoki J."/>
            <person name="Arakawa T."/>
            <person name="Iida J."/>
            <person name="Imamura K."/>
            <person name="Itoh M."/>
            <person name="Kato T."/>
            <person name="Kawaji H."/>
            <person name="Kawagashira N."/>
            <person name="Kawashima T."/>
            <person name="Kojima M."/>
            <person name="Kondo S."/>
            <person name="Konno H."/>
            <person name="Nakano K."/>
            <person name="Ninomiya N."/>
            <person name="Nishio T."/>
            <person name="Okada M."/>
            <person name="Plessy C."/>
            <person name="Shibata K."/>
            <person name="Shiraki T."/>
            <person name="Suzuki S."/>
            <person name="Tagami M."/>
            <person name="Waki K."/>
            <person name="Watahiki A."/>
            <person name="Okamura-Oho Y."/>
            <person name="Suzuki H."/>
            <person name="Kawai J."/>
            <person name="Hayashizaki Y."/>
        </authorList>
    </citation>
    <scope>NUCLEOTIDE SEQUENCE [LARGE SCALE MRNA]</scope>
    <source>
        <strain>C57BL/6J</strain>
        <strain>NOD</strain>
        <tissue>Embryonic head</tissue>
        <tissue>Olfactory bulb</tissue>
        <tissue>Spleen</tissue>
    </source>
</reference>
<reference key="2">
    <citation type="journal article" date="2004" name="Genome Res.">
        <title>The status, quality, and expansion of the NIH full-length cDNA project: the Mammalian Gene Collection (MGC).</title>
        <authorList>
            <consortium name="The MGC Project Team"/>
        </authorList>
    </citation>
    <scope>NUCLEOTIDE SEQUENCE [LARGE SCALE MRNA] OF 22-539</scope>
    <source>
        <tissue>Mammary tumor</tissue>
    </source>
</reference>
<reference key="3">
    <citation type="journal article" date="2010" name="Cell">
        <title>A tissue-specific atlas of mouse protein phosphorylation and expression.</title>
        <authorList>
            <person name="Huttlin E.L."/>
            <person name="Jedrychowski M.P."/>
            <person name="Elias J.E."/>
            <person name="Goswami T."/>
            <person name="Rad R."/>
            <person name="Beausoleil S.A."/>
            <person name="Villen J."/>
            <person name="Haas W."/>
            <person name="Sowa M.E."/>
            <person name="Gygi S.P."/>
        </authorList>
    </citation>
    <scope>IDENTIFICATION BY MASS SPECTROMETRY [LARGE SCALE ANALYSIS]</scope>
    <source>
        <tissue>Liver</tissue>
        <tissue>Pancreas</tissue>
        <tissue>Spleen</tissue>
        <tissue>Testis</tissue>
    </source>
</reference>
<name>CLP1L_MOUSE</name>
<keyword id="KW-0053">Apoptosis</keyword>
<keyword id="KW-0256">Endoplasmic reticulum</keyword>
<keyword id="KW-0325">Glycoprotein</keyword>
<keyword id="KW-0445">Lipid transport</keyword>
<keyword id="KW-0472">Membrane</keyword>
<keyword id="KW-1185">Reference proteome</keyword>
<keyword id="KW-0812">Transmembrane</keyword>
<keyword id="KW-1133">Transmembrane helix</keyword>
<keyword id="KW-0813">Transport</keyword>
<feature type="chain" id="PRO_0000331301" description="Lipid scramblase CLPTM1L">
    <location>
        <begin position="1"/>
        <end position="539"/>
    </location>
</feature>
<feature type="topological domain" description="Cytoplasmic" evidence="2">
    <location>
        <begin position="1"/>
        <end position="10"/>
    </location>
</feature>
<feature type="transmembrane region" description="Helical" evidence="2">
    <location>
        <begin position="11"/>
        <end position="31"/>
    </location>
</feature>
<feature type="topological domain" description="Extracellular" evidence="2">
    <location>
        <begin position="32"/>
        <end position="285"/>
    </location>
</feature>
<feature type="transmembrane region" description="Helical" evidence="2">
    <location>
        <begin position="286"/>
        <end position="306"/>
    </location>
</feature>
<feature type="topological domain" description="Cytoplasmic" evidence="2">
    <location>
        <begin position="307"/>
        <end position="325"/>
    </location>
</feature>
<feature type="transmembrane region" description="Helical" evidence="2">
    <location>
        <begin position="326"/>
        <end position="342"/>
    </location>
</feature>
<feature type="topological domain" description="Extracellular" evidence="2">
    <location>
        <begin position="343"/>
        <end position="403"/>
    </location>
</feature>
<feature type="transmembrane region" description="Helical" evidence="2">
    <location>
        <begin position="404"/>
        <end position="424"/>
    </location>
</feature>
<feature type="topological domain" description="Cytoplasmic" evidence="2">
    <location>
        <begin position="425"/>
        <end position="429"/>
    </location>
</feature>
<feature type="transmembrane region" description="Helical" evidence="2">
    <location>
        <begin position="430"/>
        <end position="450"/>
    </location>
</feature>
<feature type="topological domain" description="Extracellular" evidence="2">
    <location>
        <begin position="451"/>
        <end position="539"/>
    </location>
</feature>
<feature type="glycosylation site" description="N-linked (GlcNAc...) asparagine" evidence="2">
    <location>
        <position position="91"/>
    </location>
</feature>
<feature type="glycosylation site" description="N-linked (GlcNAc...) asparagine" evidence="2">
    <location>
        <position position="101"/>
    </location>
</feature>
<feature type="sequence conflict" description="In Ref. 1; BAE33624." evidence="3" ref="1">
    <original>P</original>
    <variation>L</variation>
    <location>
        <position position="212"/>
    </location>
</feature>
<comment type="function">
    <text evidence="1">Scramblase that mediates the translocation of glucosaminylphosphatidylinositol (alpha-D-GlcN-(1-6)-(1,2-diacyl-sn-glycero-3-phospho)-1D-myo-inositol, GlcN-PI) across the endoplasmic reticulum (ER) membrane, from the cytosolic leaflet to the luminal leaflet of the ER membrane, where it participates in the biosynthesis of glycosylphosphatidylinositol (GPI). GPI is a lipid glycoconjugate involved in post-translational modification of proteins. Can also translocate 1,2-diacyl-sn-glycero-3-phospho-(1D-myo-inositol) (phosphatidylinositol or PI), as well as several other phospholipids (1,2-diacyl-sn-glycero-3-phosphocholine, 1,2-diacyl-sn-glycero-3-phosphoethanolamine), and N-acetylglucosaminylphosphatidylinositol (GlcNAc-PI) in vitro.</text>
</comment>
<comment type="catalytic activity">
    <reaction evidence="1">
        <text>a 6-(alpha-D-glucosaminyl)-1-(1,2-diacyl-sn-glycero-3-phospho)-1D-myo-inositol(in) = a 6-(alpha-D-glucosaminyl)-1-(1,2-diacyl-sn-glycero-3-phospho)-1D-myo-inositol(out)</text>
        <dbReference type="Rhea" id="RHEA:71491"/>
        <dbReference type="ChEBI" id="CHEBI:57997"/>
    </reaction>
</comment>
<comment type="catalytic activity">
    <reaction evidence="1">
        <text>6-(alpha-D-glucosaminyl)-(1-octadecanoyl,2-(9Z)-octadecenoyl-sn-glycero-3-phospho)-1D-myo-inositol(in) = 6-(alpha-D-glucosaminyl)-(1-octadecanoyl,2-(9Z)-octadecenoyl-sn-glycero-3-phospho)-1D-myo-inositol(out)</text>
        <dbReference type="Rhea" id="RHEA:71495"/>
        <dbReference type="ChEBI" id="CHEBI:190691"/>
    </reaction>
</comment>
<comment type="catalytic activity">
    <reaction evidence="1">
        <text>a 1,2-diacyl-sn-glycero-3-phospho-(1D-myo-inositol)(in) = a 1,2-diacyl-sn-glycero-3-phospho-(1D-myo-inositol)(out)</text>
        <dbReference type="Rhea" id="RHEA:38691"/>
        <dbReference type="ChEBI" id="CHEBI:57880"/>
    </reaction>
</comment>
<comment type="catalytic activity">
    <reaction evidence="1">
        <text>a 1,2-diacyl-sn-glycero-3-phosphocholine(in) = a 1,2-diacyl-sn-glycero-3-phosphocholine(out)</text>
        <dbReference type="Rhea" id="RHEA:38571"/>
        <dbReference type="ChEBI" id="CHEBI:57643"/>
    </reaction>
</comment>
<comment type="catalytic activity">
    <reaction evidence="1">
        <text>a 1,2-diacyl-sn-glycero-3-phosphoethanolamine(in) = a 1,2-diacyl-sn-glycero-3-phosphoethanolamine(out)</text>
        <dbReference type="Rhea" id="RHEA:38895"/>
        <dbReference type="ChEBI" id="CHEBI:64612"/>
    </reaction>
</comment>
<comment type="subcellular location">
    <subcellularLocation>
        <location evidence="3">Endoplasmic reticulum membrane</location>
        <topology evidence="2">Multi-pass membrane protein</topology>
    </subcellularLocation>
</comment>
<comment type="similarity">
    <text evidence="3">Belongs to the CLPTM1 family.</text>
</comment>
<comment type="sequence caution" evidence="3">
    <conflict type="erroneous initiation">
        <sequence resource="EMBL-CDS" id="AAH26562"/>
    </conflict>
</comment>
<comment type="sequence caution" evidence="3">
    <conflict type="frameshift">
        <sequence resource="EMBL-CDS" id="BAC27798"/>
    </conflict>
</comment>
<protein>
    <recommendedName>
        <fullName evidence="3">Lipid scramblase CLPTM1L</fullName>
    </recommendedName>
    <alternativeName>
        <fullName evidence="1">Cisplatin resistance-related protein 9</fullName>
        <shortName>CRR9p</shortName>
    </alternativeName>
    <alternativeName>
        <fullName>Cleft lip and palate transmembrane protein 1-like protein</fullName>
        <shortName>CLPTM1-like protein</shortName>
    </alternativeName>
</protein>
<organism>
    <name type="scientific">Mus musculus</name>
    <name type="common">Mouse</name>
    <dbReference type="NCBI Taxonomy" id="10090"/>
    <lineage>
        <taxon>Eukaryota</taxon>
        <taxon>Metazoa</taxon>
        <taxon>Chordata</taxon>
        <taxon>Craniata</taxon>
        <taxon>Vertebrata</taxon>
        <taxon>Euteleostomi</taxon>
        <taxon>Mammalia</taxon>
        <taxon>Eutheria</taxon>
        <taxon>Euarchontoglires</taxon>
        <taxon>Glires</taxon>
        <taxon>Rodentia</taxon>
        <taxon>Myomorpha</taxon>
        <taxon>Muroidea</taxon>
        <taxon>Muridae</taxon>
        <taxon>Murinae</taxon>
        <taxon>Mus</taxon>
        <taxon>Mus</taxon>
    </lineage>
</organism>
<accession>Q8BXA5</accession>
<accession>Q3U176</accession>
<accession>Q8C053</accession>
<accession>Q8R0P2</accession>
<gene>
    <name type="primary">Clptm1l</name>
</gene>